<proteinExistence type="inferred from homology"/>
<name>SFSA_SHESW</name>
<evidence type="ECO:0000255" key="1">
    <source>
        <dbReference type="HAMAP-Rule" id="MF_00095"/>
    </source>
</evidence>
<protein>
    <recommendedName>
        <fullName evidence="1">Sugar fermentation stimulation protein homolog</fullName>
    </recommendedName>
</protein>
<comment type="similarity">
    <text evidence="1">Belongs to the SfsA family.</text>
</comment>
<organism>
    <name type="scientific">Shewanella sp. (strain W3-18-1)</name>
    <dbReference type="NCBI Taxonomy" id="351745"/>
    <lineage>
        <taxon>Bacteria</taxon>
        <taxon>Pseudomonadati</taxon>
        <taxon>Pseudomonadota</taxon>
        <taxon>Gammaproteobacteria</taxon>
        <taxon>Alteromonadales</taxon>
        <taxon>Shewanellaceae</taxon>
        <taxon>Shewanella</taxon>
    </lineage>
</organism>
<reference key="1">
    <citation type="submission" date="2006-12" db="EMBL/GenBank/DDBJ databases">
        <title>Complete sequence of Shewanella sp. W3-18-1.</title>
        <authorList>
            <consortium name="US DOE Joint Genome Institute"/>
            <person name="Copeland A."/>
            <person name="Lucas S."/>
            <person name="Lapidus A."/>
            <person name="Barry K."/>
            <person name="Detter J.C."/>
            <person name="Glavina del Rio T."/>
            <person name="Hammon N."/>
            <person name="Israni S."/>
            <person name="Dalin E."/>
            <person name="Tice H."/>
            <person name="Pitluck S."/>
            <person name="Chain P."/>
            <person name="Malfatti S."/>
            <person name="Shin M."/>
            <person name="Vergez L."/>
            <person name="Schmutz J."/>
            <person name="Larimer F."/>
            <person name="Land M."/>
            <person name="Hauser L."/>
            <person name="Kyrpides N."/>
            <person name="Lykidis A."/>
            <person name="Tiedje J."/>
            <person name="Richardson P."/>
        </authorList>
    </citation>
    <scope>NUCLEOTIDE SEQUENCE [LARGE SCALE GENOMIC DNA]</scope>
    <source>
        <strain>W3-18-1</strain>
    </source>
</reference>
<gene>
    <name evidence="1" type="primary">sfsA</name>
    <name type="ordered locus">Sputw3181_0816</name>
</gene>
<accession>A1RG72</accession>
<sequence length="234" mass="26012">MQFEPALQQGRLVKRYKRFLADIKLADGSEMTIHCPNTGSMRNCLFPGEAVWFSTSANPKRKYAYTWELMGTPNGGFIGIHSGSANALAEEAIHSGIIKELTGYDTLSREVKYGDENSRIDILLQGAQKPDCYIEVKSCTLLEDGQGFFPDAVSLRGQKHLRELMHMANLGHRAVLLFVVQHSEIFSVAPAAHIDHEYANLLKKATLSGVEVLAYRCEMSPTEIRLAQACPVRV</sequence>
<feature type="chain" id="PRO_1000008031" description="Sugar fermentation stimulation protein homolog">
    <location>
        <begin position="1"/>
        <end position="234"/>
    </location>
</feature>
<dbReference type="EMBL" id="CP000503">
    <property type="protein sequence ID" value="ABM23667.1"/>
    <property type="molecule type" value="Genomic_DNA"/>
</dbReference>
<dbReference type="RefSeq" id="WP_011788194.1">
    <property type="nucleotide sequence ID" value="NC_008750.1"/>
</dbReference>
<dbReference type="SMR" id="A1RG72"/>
<dbReference type="KEGG" id="shw:Sputw3181_0816"/>
<dbReference type="HOGENOM" id="CLU_052299_2_0_6"/>
<dbReference type="Proteomes" id="UP000002597">
    <property type="component" value="Chromosome"/>
</dbReference>
<dbReference type="GO" id="GO:0003677">
    <property type="term" value="F:DNA binding"/>
    <property type="evidence" value="ECO:0007669"/>
    <property type="project" value="InterPro"/>
</dbReference>
<dbReference type="CDD" id="cd22359">
    <property type="entry name" value="SfsA-like_bacterial"/>
    <property type="match status" value="1"/>
</dbReference>
<dbReference type="FunFam" id="2.40.50.580:FF:000001">
    <property type="entry name" value="Sugar fermentation stimulation protein A"/>
    <property type="match status" value="1"/>
</dbReference>
<dbReference type="FunFam" id="3.40.1350.60:FF:000001">
    <property type="entry name" value="Sugar fermentation stimulation protein A"/>
    <property type="match status" value="1"/>
</dbReference>
<dbReference type="Gene3D" id="2.40.50.580">
    <property type="match status" value="1"/>
</dbReference>
<dbReference type="Gene3D" id="3.40.1350.60">
    <property type="match status" value="1"/>
</dbReference>
<dbReference type="HAMAP" id="MF_00095">
    <property type="entry name" value="SfsA"/>
    <property type="match status" value="1"/>
</dbReference>
<dbReference type="InterPro" id="IPR005224">
    <property type="entry name" value="SfsA"/>
</dbReference>
<dbReference type="InterPro" id="IPR040452">
    <property type="entry name" value="SfsA_C"/>
</dbReference>
<dbReference type="InterPro" id="IPR041465">
    <property type="entry name" value="SfsA_N"/>
</dbReference>
<dbReference type="NCBIfam" id="TIGR00230">
    <property type="entry name" value="sfsA"/>
    <property type="match status" value="1"/>
</dbReference>
<dbReference type="PANTHER" id="PTHR30545">
    <property type="entry name" value="SUGAR FERMENTATION STIMULATION PROTEIN A"/>
    <property type="match status" value="1"/>
</dbReference>
<dbReference type="PANTHER" id="PTHR30545:SF2">
    <property type="entry name" value="SUGAR FERMENTATION STIMULATION PROTEIN A"/>
    <property type="match status" value="1"/>
</dbReference>
<dbReference type="Pfam" id="PF03749">
    <property type="entry name" value="SfsA"/>
    <property type="match status" value="1"/>
</dbReference>
<dbReference type="Pfam" id="PF17746">
    <property type="entry name" value="SfsA_N"/>
    <property type="match status" value="1"/>
</dbReference>